<protein>
    <recommendedName>
        <fullName evidence="1">ATP synthase subunit a</fullName>
    </recommendedName>
    <alternativeName>
        <fullName evidence="1">ATP synthase F0 sector subunit a</fullName>
    </alternativeName>
    <alternativeName>
        <fullName evidence="1">F-ATPase subunit 6</fullName>
    </alternativeName>
</protein>
<comment type="function">
    <text evidence="1">Key component of the proton channel; it plays a direct role in the translocation of protons across the membrane.</text>
</comment>
<comment type="subunit">
    <text evidence="1">F-type ATPases have 2 components, CF(1) - the catalytic core - and CF(0) - the membrane proton channel. CF(1) has five subunits: alpha(3), beta(3), gamma(1), delta(1), epsilon(1). CF(0) has three main subunits: a(1), b(2) and c(9-12). The alpha and beta chains form an alternating ring which encloses part of the gamma chain. CF(1) is attached to CF(0) by a central stalk formed by the gamma and epsilon chains, while a peripheral stalk is formed by the delta and b chains.</text>
</comment>
<comment type="subcellular location">
    <subcellularLocation>
        <location evidence="2">Cellular chromatophore membrane</location>
        <topology evidence="1 2">Multi-pass membrane protein</topology>
    </subcellularLocation>
</comment>
<comment type="similarity">
    <text evidence="1">Belongs to the ATPase A chain family.</text>
</comment>
<organism>
    <name type="scientific">Rhodobacter capsulatus</name>
    <name type="common">Rhodopseudomonas capsulata</name>
    <dbReference type="NCBI Taxonomy" id="1061"/>
    <lineage>
        <taxon>Bacteria</taxon>
        <taxon>Pseudomonadati</taxon>
        <taxon>Pseudomonadota</taxon>
        <taxon>Alphaproteobacteria</taxon>
        <taxon>Rhodobacterales</taxon>
        <taxon>Rhodobacter group</taxon>
        <taxon>Rhodobacter</taxon>
    </lineage>
</organism>
<gene>
    <name evidence="1" type="primary">atpB</name>
</gene>
<feature type="chain" id="PRO_0000239035" description="ATP synthase subunit a">
    <location>
        <begin position="1"/>
        <end position="237"/>
    </location>
</feature>
<feature type="transmembrane region" description="Helical" evidence="1">
    <location>
        <begin position="18"/>
        <end position="38"/>
    </location>
</feature>
<feature type="transmembrane region" description="Helical" evidence="1">
    <location>
        <begin position="77"/>
        <end position="97"/>
    </location>
</feature>
<feature type="transmembrane region" description="Helical" evidence="1">
    <location>
        <begin position="103"/>
        <end position="123"/>
    </location>
</feature>
<feature type="transmembrane region" description="Helical" evidence="1">
    <location>
        <begin position="132"/>
        <end position="152"/>
    </location>
</feature>
<feature type="transmembrane region" description="Helical" evidence="1">
    <location>
        <begin position="185"/>
        <end position="205"/>
    </location>
</feature>
<feature type="transmembrane region" description="Helical" evidence="1">
    <location>
        <begin position="209"/>
        <end position="229"/>
    </location>
</feature>
<reference key="1">
    <citation type="journal article" date="1998" name="Arch. Microbiol.">
        <title>The atpIBEXF operon coding for the Fo sector of the ATP synthase from the purple nonsulfur photosynthetic bacterium Rhodobacter capsulatus.</title>
        <authorList>
            <person name="Borghese R."/>
            <person name="Turina P."/>
            <person name="Lambertini L."/>
            <person name="Melandri B.A."/>
        </authorList>
    </citation>
    <scope>NUCLEOTIDE SEQUENCE [GENOMIC DNA]</scope>
    <source>
        <strain>ATCC 33303 / B10</strain>
    </source>
</reference>
<reference key="2">
    <citation type="journal article" date="1988" name="Biochim. Biophys. Acta">
        <title>Purification of the H+-ATPase from Rhodobacter capsulatus, identification of the F1F0 components and reconstitution of the active enzyme.</title>
        <authorList>
            <person name="Gabellini N."/>
            <person name="Gao Z."/>
            <person name="Eckerskorn C."/>
            <person name="Lottspeich F."/>
            <person name="Oesterhelt D."/>
        </authorList>
    </citation>
    <scope>SUBUNIT</scope>
    <scope>SUBCELLULAR LOCATION</scope>
    <source>
        <strain>GA</strain>
    </source>
</reference>
<proteinExistence type="evidence at protein level"/>
<dbReference type="EMBL" id="Y12313">
    <property type="protein sequence ID" value="CAA72981.1"/>
    <property type="molecule type" value="Genomic_DNA"/>
</dbReference>
<dbReference type="SMR" id="O05330"/>
<dbReference type="GO" id="GO:0005886">
    <property type="term" value="C:plasma membrane"/>
    <property type="evidence" value="ECO:0007669"/>
    <property type="project" value="UniProtKB-UniRule"/>
</dbReference>
<dbReference type="GO" id="GO:0042717">
    <property type="term" value="C:plasma membrane-derived chromatophore membrane"/>
    <property type="evidence" value="ECO:0007669"/>
    <property type="project" value="UniProtKB-SubCell"/>
</dbReference>
<dbReference type="GO" id="GO:0045259">
    <property type="term" value="C:proton-transporting ATP synthase complex"/>
    <property type="evidence" value="ECO:0007669"/>
    <property type="project" value="UniProtKB-KW"/>
</dbReference>
<dbReference type="GO" id="GO:0046933">
    <property type="term" value="F:proton-transporting ATP synthase activity, rotational mechanism"/>
    <property type="evidence" value="ECO:0007669"/>
    <property type="project" value="UniProtKB-UniRule"/>
</dbReference>
<dbReference type="CDD" id="cd00310">
    <property type="entry name" value="ATP-synt_Fo_a_6"/>
    <property type="match status" value="1"/>
</dbReference>
<dbReference type="Gene3D" id="1.20.120.220">
    <property type="entry name" value="ATP synthase, F0 complex, subunit A"/>
    <property type="match status" value="1"/>
</dbReference>
<dbReference type="HAMAP" id="MF_01393">
    <property type="entry name" value="ATP_synth_a_bact"/>
    <property type="match status" value="1"/>
</dbReference>
<dbReference type="InterPro" id="IPR000568">
    <property type="entry name" value="ATP_synth_F0_asu"/>
</dbReference>
<dbReference type="InterPro" id="IPR023011">
    <property type="entry name" value="ATP_synth_F0_asu_AS"/>
</dbReference>
<dbReference type="InterPro" id="IPR045083">
    <property type="entry name" value="ATP_synth_F0_asu_bact/mt"/>
</dbReference>
<dbReference type="InterPro" id="IPR035908">
    <property type="entry name" value="F0_ATP_A_sf"/>
</dbReference>
<dbReference type="NCBIfam" id="TIGR01131">
    <property type="entry name" value="ATP_synt_6_or_A"/>
    <property type="match status" value="1"/>
</dbReference>
<dbReference type="NCBIfam" id="NF004482">
    <property type="entry name" value="PRK05815.2-4"/>
    <property type="match status" value="1"/>
</dbReference>
<dbReference type="PANTHER" id="PTHR11410">
    <property type="entry name" value="ATP SYNTHASE SUBUNIT A"/>
    <property type="match status" value="1"/>
</dbReference>
<dbReference type="PANTHER" id="PTHR11410:SF0">
    <property type="entry name" value="ATP SYNTHASE SUBUNIT A"/>
    <property type="match status" value="1"/>
</dbReference>
<dbReference type="Pfam" id="PF00119">
    <property type="entry name" value="ATP-synt_A"/>
    <property type="match status" value="1"/>
</dbReference>
<dbReference type="PRINTS" id="PR00123">
    <property type="entry name" value="ATPASEA"/>
</dbReference>
<dbReference type="SUPFAM" id="SSF81336">
    <property type="entry name" value="F1F0 ATP synthase subunit A"/>
    <property type="match status" value="1"/>
</dbReference>
<dbReference type="PROSITE" id="PS00449">
    <property type="entry name" value="ATPASE_A"/>
    <property type="match status" value="1"/>
</dbReference>
<name>ATP6_RHOCA</name>
<keyword id="KW-0066">ATP synthesis</keyword>
<keyword id="KW-0138">CF(0)</keyword>
<keyword id="KW-0375">Hydrogen ion transport</keyword>
<keyword id="KW-0406">Ion transport</keyword>
<keyword id="KW-0472">Membrane</keyword>
<keyword id="KW-0812">Transmembrane</keyword>
<keyword id="KW-1133">Transmembrane helix</keyword>
<keyword id="KW-0813">Transport</keyword>
<sequence>MFDGEAIRWFEFFVPTNSTLWMAIGVLMIALLMVVGTLRRAIVPGRIQSLAELTYGFIHKMVEDVAGKDGLVYFPYIFTLFLFILFSNFLGLIPMAFTPTSHIAVTGVMAMGVFIGVTALGFMKHGSHFLNLFWVSAAPLPLRPILAVIEVISYFVRPVSHSIRLAGNMMAGHAVMEVFAAFAPLILFSFVGVIVTPLSVLAIVAMYALEILVAFVQAYVFTILTCVYLKDALHPGH</sequence>
<evidence type="ECO:0000255" key="1">
    <source>
        <dbReference type="HAMAP-Rule" id="MF_01393"/>
    </source>
</evidence>
<evidence type="ECO:0000269" key="2">
    <source ref="2"/>
</evidence>
<accession>O05330</accession>